<comment type="catalytic activity">
    <reaction>
        <text>(2R)-3-phosphoglycerate + ATP = (2R)-3-phospho-glyceroyl phosphate + ADP</text>
        <dbReference type="Rhea" id="RHEA:14801"/>
        <dbReference type="ChEBI" id="CHEBI:30616"/>
        <dbReference type="ChEBI" id="CHEBI:57604"/>
        <dbReference type="ChEBI" id="CHEBI:58272"/>
        <dbReference type="ChEBI" id="CHEBI:456216"/>
        <dbReference type="EC" id="2.7.2.3"/>
    </reaction>
</comment>
<comment type="pathway">
    <text>Carbohydrate degradation; glycolysis; pyruvate from D-glyceraldehyde 3-phosphate: step 2/5.</text>
</comment>
<comment type="subunit">
    <text evidence="1">Monomer.</text>
</comment>
<comment type="subcellular location">
    <subcellularLocation>
        <location evidence="2">Cytoplasm</location>
    </subcellularLocation>
</comment>
<comment type="similarity">
    <text evidence="2">Belongs to the phosphoglycerate kinase family.</text>
</comment>
<protein>
    <recommendedName>
        <fullName>Phosphoglycerate kinase</fullName>
        <ecNumber>2.7.2.3</ecNumber>
    </recommendedName>
</protein>
<organism>
    <name type="scientific">Mycoplasma pneumoniae (strain ATCC 29342 / M129 / Subtype 1)</name>
    <name type="common">Mycoplasmoides pneumoniae</name>
    <dbReference type="NCBI Taxonomy" id="272634"/>
    <lineage>
        <taxon>Bacteria</taxon>
        <taxon>Bacillati</taxon>
        <taxon>Mycoplasmatota</taxon>
        <taxon>Mycoplasmoidales</taxon>
        <taxon>Mycoplasmoidaceae</taxon>
        <taxon>Mycoplasmoides</taxon>
    </lineage>
</organism>
<accession>P78018</accession>
<gene>
    <name type="primary">pgk</name>
    <name type="ordered locus">MPN_429</name>
    <name type="ORF">MP412</name>
</gene>
<dbReference type="EC" id="2.7.2.3"/>
<dbReference type="EMBL" id="U00089">
    <property type="protein sequence ID" value="AAB96060.1"/>
    <property type="molecule type" value="Genomic_DNA"/>
</dbReference>
<dbReference type="PIR" id="S73738">
    <property type="entry name" value="S73738"/>
</dbReference>
<dbReference type="RefSeq" id="NP_110117.1">
    <property type="nucleotide sequence ID" value="NC_000912.1"/>
</dbReference>
<dbReference type="RefSeq" id="WP_010874785.1">
    <property type="nucleotide sequence ID" value="NZ_OU342337.1"/>
</dbReference>
<dbReference type="SMR" id="P78018"/>
<dbReference type="IntAct" id="P78018">
    <property type="interactions" value="2"/>
</dbReference>
<dbReference type="STRING" id="272634.MPN_429"/>
<dbReference type="EnsemblBacteria" id="AAB96060">
    <property type="protein sequence ID" value="AAB96060"/>
    <property type="gene ID" value="MPN_429"/>
</dbReference>
<dbReference type="KEGG" id="mpn:MPN_429"/>
<dbReference type="PATRIC" id="fig|272634.6.peg.464"/>
<dbReference type="HOGENOM" id="CLU_025427_0_2_14"/>
<dbReference type="OrthoDB" id="9808460at2"/>
<dbReference type="BioCyc" id="MetaCyc:MONOMER-549"/>
<dbReference type="BioCyc" id="MPNE272634:G1GJ3-693-MONOMER"/>
<dbReference type="UniPathway" id="UPA00109">
    <property type="reaction ID" value="UER00185"/>
</dbReference>
<dbReference type="Proteomes" id="UP000000808">
    <property type="component" value="Chromosome"/>
</dbReference>
<dbReference type="GO" id="GO:0005829">
    <property type="term" value="C:cytosol"/>
    <property type="evidence" value="ECO:0007669"/>
    <property type="project" value="TreeGrafter"/>
</dbReference>
<dbReference type="GO" id="GO:0043531">
    <property type="term" value="F:ADP binding"/>
    <property type="evidence" value="ECO:0007669"/>
    <property type="project" value="TreeGrafter"/>
</dbReference>
<dbReference type="GO" id="GO:0005524">
    <property type="term" value="F:ATP binding"/>
    <property type="evidence" value="ECO:0007669"/>
    <property type="project" value="UniProtKB-KW"/>
</dbReference>
<dbReference type="GO" id="GO:0004618">
    <property type="term" value="F:phosphoglycerate kinase activity"/>
    <property type="evidence" value="ECO:0007669"/>
    <property type="project" value="UniProtKB-UniRule"/>
</dbReference>
<dbReference type="GO" id="GO:0006094">
    <property type="term" value="P:gluconeogenesis"/>
    <property type="evidence" value="ECO:0007669"/>
    <property type="project" value="TreeGrafter"/>
</dbReference>
<dbReference type="GO" id="GO:0006096">
    <property type="term" value="P:glycolytic process"/>
    <property type="evidence" value="ECO:0007669"/>
    <property type="project" value="UniProtKB-UniRule"/>
</dbReference>
<dbReference type="FunFam" id="3.40.50.1260:FF:000006">
    <property type="entry name" value="Phosphoglycerate kinase"/>
    <property type="match status" value="1"/>
</dbReference>
<dbReference type="FunFam" id="3.40.50.1260:FF:000031">
    <property type="entry name" value="Phosphoglycerate kinase 1"/>
    <property type="match status" value="1"/>
</dbReference>
<dbReference type="Gene3D" id="3.40.50.1260">
    <property type="entry name" value="Phosphoglycerate kinase, N-terminal domain"/>
    <property type="match status" value="2"/>
</dbReference>
<dbReference type="HAMAP" id="MF_00145">
    <property type="entry name" value="Phosphoglyc_kinase"/>
    <property type="match status" value="1"/>
</dbReference>
<dbReference type="InterPro" id="IPR001576">
    <property type="entry name" value="Phosphoglycerate_kinase"/>
</dbReference>
<dbReference type="InterPro" id="IPR015911">
    <property type="entry name" value="Phosphoglycerate_kinase_CS"/>
</dbReference>
<dbReference type="InterPro" id="IPR015824">
    <property type="entry name" value="Phosphoglycerate_kinase_N"/>
</dbReference>
<dbReference type="InterPro" id="IPR036043">
    <property type="entry name" value="Phosphoglycerate_kinase_sf"/>
</dbReference>
<dbReference type="PANTHER" id="PTHR11406">
    <property type="entry name" value="PHOSPHOGLYCERATE KINASE"/>
    <property type="match status" value="1"/>
</dbReference>
<dbReference type="PANTHER" id="PTHR11406:SF23">
    <property type="entry name" value="PHOSPHOGLYCERATE KINASE 1, CHLOROPLASTIC-RELATED"/>
    <property type="match status" value="1"/>
</dbReference>
<dbReference type="Pfam" id="PF00162">
    <property type="entry name" value="PGK"/>
    <property type="match status" value="1"/>
</dbReference>
<dbReference type="PIRSF" id="PIRSF000724">
    <property type="entry name" value="Pgk"/>
    <property type="match status" value="1"/>
</dbReference>
<dbReference type="PRINTS" id="PR00477">
    <property type="entry name" value="PHGLYCKINASE"/>
</dbReference>
<dbReference type="SUPFAM" id="SSF53748">
    <property type="entry name" value="Phosphoglycerate kinase"/>
    <property type="match status" value="1"/>
</dbReference>
<dbReference type="PROSITE" id="PS00111">
    <property type="entry name" value="PGLYCERATE_KINASE"/>
    <property type="match status" value="1"/>
</dbReference>
<reference key="1">
    <citation type="journal article" date="1996" name="Nucleic Acids Res.">
        <title>Complete sequence analysis of the genome of the bacterium Mycoplasma pneumoniae.</title>
        <authorList>
            <person name="Himmelreich R."/>
            <person name="Hilbert H."/>
            <person name="Plagens H."/>
            <person name="Pirkl E."/>
            <person name="Li B.-C."/>
            <person name="Herrmann R."/>
        </authorList>
    </citation>
    <scope>NUCLEOTIDE SEQUENCE [LARGE SCALE GENOMIC DNA]</scope>
    <source>
        <strain>ATCC 29342 / M129 / Subtype 1</strain>
    </source>
</reference>
<evidence type="ECO:0000250" key="1"/>
<evidence type="ECO:0000305" key="2"/>
<proteinExistence type="inferred from homology"/>
<feature type="chain" id="PRO_0000145971" description="Phosphoglycerate kinase">
    <location>
        <begin position="1"/>
        <end position="409"/>
    </location>
</feature>
<feature type="binding site" evidence="1">
    <location>
        <begin position="22"/>
        <end position="24"/>
    </location>
    <ligand>
        <name>substrate</name>
    </ligand>
</feature>
<feature type="binding site" evidence="1">
    <location>
        <position position="37"/>
    </location>
    <ligand>
        <name>substrate</name>
    </ligand>
</feature>
<feature type="binding site" evidence="1">
    <location>
        <begin position="60"/>
        <end position="63"/>
    </location>
    <ligand>
        <name>substrate</name>
    </ligand>
</feature>
<feature type="binding site" evidence="1">
    <location>
        <position position="122"/>
    </location>
    <ligand>
        <name>substrate</name>
    </ligand>
</feature>
<feature type="binding site" evidence="1">
    <location>
        <position position="164"/>
    </location>
    <ligand>
        <name>substrate</name>
    </ligand>
</feature>
<feature type="binding site" evidence="1">
    <location>
        <position position="215"/>
    </location>
    <ligand>
        <name>ATP</name>
        <dbReference type="ChEBI" id="CHEBI:30616"/>
    </ligand>
</feature>
<feature type="binding site" evidence="1">
    <location>
        <position position="338"/>
    </location>
    <ligand>
        <name>ATP</name>
        <dbReference type="ChEBI" id="CHEBI:30616"/>
    </ligand>
</feature>
<feature type="binding site" evidence="1">
    <location>
        <begin position="365"/>
        <end position="368"/>
    </location>
    <ligand>
        <name>ATP</name>
        <dbReference type="ChEBI" id="CHEBI:30616"/>
    </ligand>
</feature>
<keyword id="KW-0067">ATP-binding</keyword>
<keyword id="KW-0963">Cytoplasm</keyword>
<keyword id="KW-0324">Glycolysis</keyword>
<keyword id="KW-0418">Kinase</keyword>
<keyword id="KW-0547">Nucleotide-binding</keyword>
<keyword id="KW-1185">Reference proteome</keyword>
<keyword id="KW-0808">Transferase</keyword>
<sequence>MVDFKTVQAFDFQGKTVVLRADLNVPMKDGVITDNERILASLDTIKYLLGHNCKIVLLSHLSRVKSLDDKKGKKSLQPVASALQNLLKNTKVHFCPENTGDKVKVAVNQLPLGEILVLENTRYCDVNEAGEVVKHESKNNAELAQFWASLGDIFVNDAFGTAHRRHASNAGIAKYIKNSCIGLLMERELINLYRLINNPPKPFVVVLGGAKVSDKLQVVNNLFKIADHILIGGGMVNTFLKALGNEVGTSLVEEDLVQTAKQILDSDKDKKIVLGVDQMLHASFKDEPGVECVVAPQWPAELQGFMSLDVGSKTVALFSSYLAKAKTIFWNGPMGVFEFSNYAQGTLAIGKAIAQNQQAFSVIGGGDSAAAAKQLQIADQFSFISTGGGASLALIGGEELVGISDIQKK</sequence>
<name>PGK_MYCPN</name>